<evidence type="ECO:0000250" key="1">
    <source>
        <dbReference type="UniProtKB" id="P05743"/>
    </source>
</evidence>
<evidence type="ECO:0000256" key="2">
    <source>
        <dbReference type="SAM" id="MobiDB-lite"/>
    </source>
</evidence>
<evidence type="ECO:0000269" key="3">
    <source>
    </source>
</evidence>
<evidence type="ECO:0000305" key="4"/>
<evidence type="ECO:0007829" key="5">
    <source>
        <dbReference type="PDB" id="8ETC"/>
    </source>
</evidence>
<evidence type="ECO:0007829" key="6">
    <source>
        <dbReference type="PDB" id="8EUY"/>
    </source>
</evidence>
<proteinExistence type="evidence at protein level"/>
<gene>
    <name type="primary">rpl26</name>
    <name type="ORF">SPBC29B5.03c</name>
</gene>
<organism>
    <name type="scientific">Schizosaccharomyces pombe (strain 972 / ATCC 24843)</name>
    <name type="common">Fission yeast</name>
    <dbReference type="NCBI Taxonomy" id="284812"/>
    <lineage>
        <taxon>Eukaryota</taxon>
        <taxon>Fungi</taxon>
        <taxon>Dikarya</taxon>
        <taxon>Ascomycota</taxon>
        <taxon>Taphrinomycotina</taxon>
        <taxon>Schizosaccharomycetes</taxon>
        <taxon>Schizosaccharomycetales</taxon>
        <taxon>Schizosaccharomycetaceae</taxon>
        <taxon>Schizosaccharomyces</taxon>
    </lineage>
</organism>
<keyword id="KW-0002">3D-structure</keyword>
<keyword id="KW-0963">Cytoplasm</keyword>
<keyword id="KW-0539">Nucleus</keyword>
<keyword id="KW-1185">Reference proteome</keyword>
<keyword id="KW-0687">Ribonucleoprotein</keyword>
<keyword id="KW-0689">Ribosomal protein</keyword>
<accession>P78946</accession>
<protein>
    <recommendedName>
        <fullName evidence="4">Large ribosomal subunit protein uL24</fullName>
    </recommendedName>
    <alternativeName>
        <fullName>60S ribosomal protein L26</fullName>
    </alternativeName>
</protein>
<name>RL26_SCHPO</name>
<dbReference type="EMBL" id="D83993">
    <property type="protein sequence ID" value="BAA12196.1"/>
    <property type="molecule type" value="Genomic_DNA"/>
</dbReference>
<dbReference type="EMBL" id="CU329671">
    <property type="protein sequence ID" value="CAC05512.1"/>
    <property type="molecule type" value="Genomic_DNA"/>
</dbReference>
<dbReference type="RefSeq" id="NP_595654.1">
    <property type="nucleotide sequence ID" value="NM_001021548.2"/>
</dbReference>
<dbReference type="PDB" id="8ESQ">
    <property type="method" value="EM"/>
    <property type="resolution" value="2.80 A"/>
    <property type="chains" value="Y=1-126"/>
</dbReference>
<dbReference type="PDB" id="8ESR">
    <property type="method" value="EM"/>
    <property type="resolution" value="3.20 A"/>
    <property type="chains" value="Y=1-126"/>
</dbReference>
<dbReference type="PDB" id="8ETC">
    <property type="method" value="EM"/>
    <property type="resolution" value="3.10 A"/>
    <property type="chains" value="Y=1-126"/>
</dbReference>
<dbReference type="PDB" id="8ETG">
    <property type="method" value="EM"/>
    <property type="resolution" value="3.40 A"/>
    <property type="chains" value="Y=1-126"/>
</dbReference>
<dbReference type="PDB" id="8ETH">
    <property type="method" value="EM"/>
    <property type="resolution" value="3.80 A"/>
    <property type="chains" value="Y=1-126"/>
</dbReference>
<dbReference type="PDB" id="8ETI">
    <property type="method" value="EM"/>
    <property type="resolution" value="3.70 A"/>
    <property type="chains" value="Y=1-126"/>
</dbReference>
<dbReference type="PDB" id="8ETJ">
    <property type="method" value="EM"/>
    <property type="resolution" value="3.20 A"/>
    <property type="chains" value="Y=1-126"/>
</dbReference>
<dbReference type="PDB" id="8EUG">
    <property type="method" value="EM"/>
    <property type="resolution" value="2.80 A"/>
    <property type="chains" value="Y=1-126"/>
</dbReference>
<dbReference type="PDB" id="8EUI">
    <property type="method" value="EM"/>
    <property type="resolution" value="3.10 A"/>
    <property type="chains" value="Y=1-126"/>
</dbReference>
<dbReference type="PDB" id="8EUP">
    <property type="method" value="EM"/>
    <property type="resolution" value="3.10 A"/>
    <property type="chains" value="Y=1-126"/>
</dbReference>
<dbReference type="PDB" id="8EUY">
    <property type="method" value="EM"/>
    <property type="resolution" value="3.00 A"/>
    <property type="chains" value="Y=1-126"/>
</dbReference>
<dbReference type="PDB" id="8EV3">
    <property type="method" value="EM"/>
    <property type="resolution" value="3.00 A"/>
    <property type="chains" value="Y=1-126"/>
</dbReference>
<dbReference type="PDB" id="9AXT">
    <property type="method" value="EM"/>
    <property type="resolution" value="2.40 A"/>
    <property type="chains" value="Bk=1-126"/>
</dbReference>
<dbReference type="PDB" id="9AXU">
    <property type="method" value="EM"/>
    <property type="resolution" value="1.94 A"/>
    <property type="chains" value="k=1-126"/>
</dbReference>
<dbReference type="PDB" id="9AXV">
    <property type="method" value="EM"/>
    <property type="resolution" value="2.40 A"/>
    <property type="chains" value="Bk=1-126"/>
</dbReference>
<dbReference type="PDBsum" id="8ESQ"/>
<dbReference type="PDBsum" id="8ESR"/>
<dbReference type="PDBsum" id="8ETC"/>
<dbReference type="PDBsum" id="8ETG"/>
<dbReference type="PDBsum" id="8ETH"/>
<dbReference type="PDBsum" id="8ETI"/>
<dbReference type="PDBsum" id="8ETJ"/>
<dbReference type="PDBsum" id="8EUG"/>
<dbReference type="PDBsum" id="8EUI"/>
<dbReference type="PDBsum" id="8EUP"/>
<dbReference type="PDBsum" id="8EUY"/>
<dbReference type="PDBsum" id="8EV3"/>
<dbReference type="PDBsum" id="9AXT"/>
<dbReference type="PDBsum" id="9AXU"/>
<dbReference type="PDBsum" id="9AXV"/>
<dbReference type="EMDB" id="EMD-43972"/>
<dbReference type="EMDB" id="EMD-43973"/>
<dbReference type="EMDB" id="EMD-43976"/>
<dbReference type="SMR" id="P78946"/>
<dbReference type="BioGRID" id="276805">
    <property type="interactions" value="18"/>
</dbReference>
<dbReference type="FunCoup" id="P78946">
    <property type="interactions" value="551"/>
</dbReference>
<dbReference type="IntAct" id="P78946">
    <property type="interactions" value="2"/>
</dbReference>
<dbReference type="STRING" id="284812.P78946"/>
<dbReference type="iPTMnet" id="P78946"/>
<dbReference type="PaxDb" id="4896-SPBC29B5.03c.1"/>
<dbReference type="EnsemblFungi" id="SPBC29B5.03c.1">
    <property type="protein sequence ID" value="SPBC29B5.03c.1:pep"/>
    <property type="gene ID" value="SPBC29B5.03c"/>
</dbReference>
<dbReference type="GeneID" id="2540274"/>
<dbReference type="KEGG" id="spo:2540274"/>
<dbReference type="PomBase" id="SPBC29B5.03c">
    <property type="gene designation" value="rpl26"/>
</dbReference>
<dbReference type="VEuPathDB" id="FungiDB:SPBC29B5.03c"/>
<dbReference type="eggNOG" id="KOG3401">
    <property type="taxonomic scope" value="Eukaryota"/>
</dbReference>
<dbReference type="HOGENOM" id="CLU_093240_0_1_1"/>
<dbReference type="InParanoid" id="P78946"/>
<dbReference type="OMA" id="VRIMRGD"/>
<dbReference type="PhylomeDB" id="P78946"/>
<dbReference type="Reactome" id="R-SPO-156827">
    <property type="pathway name" value="L13a-mediated translational silencing of Ceruloplasmin expression"/>
</dbReference>
<dbReference type="Reactome" id="R-SPO-1799339">
    <property type="pathway name" value="SRP-dependent cotranslational protein targeting to membrane"/>
</dbReference>
<dbReference type="Reactome" id="R-SPO-72689">
    <property type="pathway name" value="Formation of a pool of free 40S subunits"/>
</dbReference>
<dbReference type="Reactome" id="R-SPO-72706">
    <property type="pathway name" value="GTP hydrolysis and joining of the 60S ribosomal subunit"/>
</dbReference>
<dbReference type="Reactome" id="R-SPO-975956">
    <property type="pathway name" value="Nonsense Mediated Decay (NMD) independent of the Exon Junction Complex (EJC)"/>
</dbReference>
<dbReference type="Reactome" id="R-SPO-975957">
    <property type="pathway name" value="Nonsense Mediated Decay (NMD) enhanced by the Exon Junction Complex (EJC)"/>
</dbReference>
<dbReference type="PRO" id="PR:P78946"/>
<dbReference type="Proteomes" id="UP000002485">
    <property type="component" value="Chromosome II"/>
</dbReference>
<dbReference type="GO" id="GO:0005829">
    <property type="term" value="C:cytosol"/>
    <property type="evidence" value="ECO:0007005"/>
    <property type="project" value="PomBase"/>
</dbReference>
<dbReference type="GO" id="GO:0022625">
    <property type="term" value="C:cytosolic large ribosomal subunit"/>
    <property type="evidence" value="ECO:0000269"/>
    <property type="project" value="PomBase"/>
</dbReference>
<dbReference type="GO" id="GO:0005730">
    <property type="term" value="C:nucleolus"/>
    <property type="evidence" value="ECO:0007005"/>
    <property type="project" value="PomBase"/>
</dbReference>
<dbReference type="GO" id="GO:0005634">
    <property type="term" value="C:nucleus"/>
    <property type="evidence" value="ECO:0007005"/>
    <property type="project" value="PomBase"/>
</dbReference>
<dbReference type="GO" id="GO:0030684">
    <property type="term" value="C:preribosome"/>
    <property type="evidence" value="ECO:0000314"/>
    <property type="project" value="PomBase"/>
</dbReference>
<dbReference type="GO" id="GO:0003723">
    <property type="term" value="F:RNA binding"/>
    <property type="evidence" value="ECO:0000318"/>
    <property type="project" value="GO_Central"/>
</dbReference>
<dbReference type="GO" id="GO:0003735">
    <property type="term" value="F:structural constituent of ribosome"/>
    <property type="evidence" value="ECO:0000318"/>
    <property type="project" value="GO_Central"/>
</dbReference>
<dbReference type="GO" id="GO:0002181">
    <property type="term" value="P:cytoplasmic translation"/>
    <property type="evidence" value="ECO:0000318"/>
    <property type="project" value="GO_Central"/>
</dbReference>
<dbReference type="GO" id="GO:0042273">
    <property type="term" value="P:ribosomal large subunit biogenesis"/>
    <property type="evidence" value="ECO:0000318"/>
    <property type="project" value="GO_Central"/>
</dbReference>
<dbReference type="CDD" id="cd06089">
    <property type="entry name" value="KOW_RPL26"/>
    <property type="match status" value="1"/>
</dbReference>
<dbReference type="FunFam" id="2.30.30.30:FF:000009">
    <property type="entry name" value="60S ribosomal protein L26"/>
    <property type="match status" value="1"/>
</dbReference>
<dbReference type="Gene3D" id="2.30.30.30">
    <property type="match status" value="1"/>
</dbReference>
<dbReference type="HAMAP" id="MF_01326_A">
    <property type="entry name" value="Ribosomal_uL24_A"/>
    <property type="match status" value="1"/>
</dbReference>
<dbReference type="InterPro" id="IPR005824">
    <property type="entry name" value="KOW"/>
</dbReference>
<dbReference type="InterPro" id="IPR014722">
    <property type="entry name" value="Rib_uL2_dom2"/>
</dbReference>
<dbReference type="InterPro" id="IPR005825">
    <property type="entry name" value="Ribosomal_uL24_CS"/>
</dbReference>
<dbReference type="InterPro" id="IPR005756">
    <property type="entry name" value="Ribosomal_uL24_euk/arc"/>
</dbReference>
<dbReference type="InterPro" id="IPR041988">
    <property type="entry name" value="Ribosomal_uL24_KOW"/>
</dbReference>
<dbReference type="InterPro" id="IPR008991">
    <property type="entry name" value="Translation_prot_SH3-like_sf"/>
</dbReference>
<dbReference type="NCBIfam" id="TIGR01080">
    <property type="entry name" value="rplX_A_E"/>
    <property type="match status" value="1"/>
</dbReference>
<dbReference type="PANTHER" id="PTHR11143">
    <property type="entry name" value="60S RIBOSOMAL PROTEIN L26 FAMILY MEMBER"/>
    <property type="match status" value="1"/>
</dbReference>
<dbReference type="Pfam" id="PF00467">
    <property type="entry name" value="KOW"/>
    <property type="match status" value="1"/>
</dbReference>
<dbReference type="Pfam" id="PF16906">
    <property type="entry name" value="Ribosomal_L26"/>
    <property type="match status" value="1"/>
</dbReference>
<dbReference type="SMART" id="SM00739">
    <property type="entry name" value="KOW"/>
    <property type="match status" value="1"/>
</dbReference>
<dbReference type="SUPFAM" id="SSF50104">
    <property type="entry name" value="Translation proteins SH3-like domain"/>
    <property type="match status" value="1"/>
</dbReference>
<dbReference type="PROSITE" id="PS01108">
    <property type="entry name" value="RIBOSOMAL_L24"/>
    <property type="match status" value="1"/>
</dbReference>
<feature type="chain" id="PRO_0000130800" description="Large ribosomal subunit protein uL24">
    <location>
        <begin position="1"/>
        <end position="126"/>
    </location>
</feature>
<feature type="region of interest" description="Disordered" evidence="2">
    <location>
        <begin position="1"/>
        <end position="23"/>
    </location>
</feature>
<feature type="strand" evidence="5">
    <location>
        <begin position="5"/>
        <end position="7"/>
    </location>
</feature>
<feature type="helix" evidence="6">
    <location>
        <begin position="11"/>
        <end position="19"/>
    </location>
</feature>
<feature type="helix" evidence="6">
    <location>
        <begin position="23"/>
        <end position="29"/>
    </location>
</feature>
<feature type="strand" evidence="6">
    <location>
        <begin position="30"/>
        <end position="34"/>
    </location>
</feature>
<feature type="helix" evidence="6">
    <location>
        <begin position="36"/>
        <end position="42"/>
    </location>
</feature>
<feature type="strand" evidence="6">
    <location>
        <begin position="45"/>
        <end position="48"/>
    </location>
</feature>
<feature type="strand" evidence="6">
    <location>
        <begin position="54"/>
        <end position="57"/>
    </location>
</feature>
<feature type="turn" evidence="6">
    <location>
        <begin position="61"/>
        <end position="64"/>
    </location>
</feature>
<feature type="strand" evidence="6">
    <location>
        <begin position="66"/>
        <end position="73"/>
    </location>
</feature>
<feature type="helix" evidence="6">
    <location>
        <begin position="74"/>
        <end position="76"/>
    </location>
</feature>
<feature type="strand" evidence="6">
    <location>
        <begin position="78"/>
        <end position="87"/>
    </location>
</feature>
<feature type="strand" evidence="5">
    <location>
        <begin position="89"/>
        <end position="91"/>
    </location>
</feature>
<feature type="strand" evidence="6">
    <location>
        <begin position="93"/>
        <end position="98"/>
    </location>
</feature>
<feature type="helix" evidence="6">
    <location>
        <begin position="100"/>
        <end position="102"/>
    </location>
</feature>
<feature type="strand" evidence="6">
    <location>
        <begin position="103"/>
        <end position="107"/>
    </location>
</feature>
<feature type="helix" evidence="6">
    <location>
        <begin position="112"/>
        <end position="120"/>
    </location>
</feature>
<comment type="function">
    <text evidence="1">Component of the ribosome, a large ribonucleoprotein complex responsible for the synthesis of proteins in the cell. The small ribosomal subunit (SSU) binds messenger RNAs (mRNAs) and translates the encoded message by selecting cognate aminoacyl-transfer RNA (tRNA) molecules. The large subunit (LSU) contains the ribosomal catalytic site termed the peptidyl transferase center (PTC), which catalyzes the formation of peptide bonds, thereby polymerizing the amino acids delivered by tRNAs into a polypeptide chain. The nascent polypeptides leave the ribosome through a tunnel in the LSU and interact with protein factors that function in enzymatic processing, targeting, and the membrane insertion of nascent chains at the exit of the ribosomal tunnel.</text>
</comment>
<comment type="subunit">
    <text evidence="1">Component of the large ribosomal subunit (LSU). Mature yeast ribosomes consist of a small (40S) and a large (60S) subunit. The 40S small subunit contains 1 molecule of ribosomal RNA (18S rRNA) and at least 33 different proteins. The large 60S subunit contains 3 rRNA molecules (25S, 5.8S and 5S rRNA) and at least 46 different proteins.</text>
</comment>
<comment type="subcellular location">
    <subcellularLocation>
        <location evidence="3">Cytoplasm</location>
    </subcellularLocation>
    <subcellularLocation>
        <location evidence="3">Nucleus</location>
    </subcellularLocation>
    <subcellularLocation>
        <location evidence="3">Nucleus</location>
        <location evidence="3">Nucleolus</location>
    </subcellularLocation>
</comment>
<comment type="similarity">
    <text evidence="4">Belongs to the universal ribosomal protein uL24 family.</text>
</comment>
<reference key="1">
    <citation type="submission" date="1996-03" db="EMBL/GenBank/DDBJ databases">
        <title>S.pombe chromosome II cosmid 1228 sequence.</title>
        <authorList>
            <person name="Kohnosu A."/>
            <person name="Niwa O."/>
            <person name="Yano M."/>
            <person name="Saitoh S."/>
            <person name="Katayama T."/>
            <person name="Nagao K."/>
            <person name="Yanagida M."/>
        </authorList>
    </citation>
    <scope>NUCLEOTIDE SEQUENCE [GENOMIC DNA]</scope>
    <source>
        <strain>972 / ATCC 24843</strain>
    </source>
</reference>
<reference key="2">
    <citation type="journal article" date="2002" name="Nature">
        <title>The genome sequence of Schizosaccharomyces pombe.</title>
        <authorList>
            <person name="Wood V."/>
            <person name="Gwilliam R."/>
            <person name="Rajandream M.A."/>
            <person name="Lyne M.H."/>
            <person name="Lyne R."/>
            <person name="Stewart A."/>
            <person name="Sgouros J.G."/>
            <person name="Peat N."/>
            <person name="Hayles J."/>
            <person name="Baker S.G."/>
            <person name="Basham D."/>
            <person name="Bowman S."/>
            <person name="Brooks K."/>
            <person name="Brown D."/>
            <person name="Brown S."/>
            <person name="Chillingworth T."/>
            <person name="Churcher C.M."/>
            <person name="Collins M."/>
            <person name="Connor R."/>
            <person name="Cronin A."/>
            <person name="Davis P."/>
            <person name="Feltwell T."/>
            <person name="Fraser A."/>
            <person name="Gentles S."/>
            <person name="Goble A."/>
            <person name="Hamlin N."/>
            <person name="Harris D.E."/>
            <person name="Hidalgo J."/>
            <person name="Hodgson G."/>
            <person name="Holroyd S."/>
            <person name="Hornsby T."/>
            <person name="Howarth S."/>
            <person name="Huckle E.J."/>
            <person name="Hunt S."/>
            <person name="Jagels K."/>
            <person name="James K.D."/>
            <person name="Jones L."/>
            <person name="Jones M."/>
            <person name="Leather S."/>
            <person name="McDonald S."/>
            <person name="McLean J."/>
            <person name="Mooney P."/>
            <person name="Moule S."/>
            <person name="Mungall K.L."/>
            <person name="Murphy L.D."/>
            <person name="Niblett D."/>
            <person name="Odell C."/>
            <person name="Oliver K."/>
            <person name="O'Neil S."/>
            <person name="Pearson D."/>
            <person name="Quail M.A."/>
            <person name="Rabbinowitsch E."/>
            <person name="Rutherford K.M."/>
            <person name="Rutter S."/>
            <person name="Saunders D."/>
            <person name="Seeger K."/>
            <person name="Sharp S."/>
            <person name="Skelton J."/>
            <person name="Simmonds M.N."/>
            <person name="Squares R."/>
            <person name="Squares S."/>
            <person name="Stevens K."/>
            <person name="Taylor K."/>
            <person name="Taylor R.G."/>
            <person name="Tivey A."/>
            <person name="Walsh S.V."/>
            <person name="Warren T."/>
            <person name="Whitehead S."/>
            <person name="Woodward J.R."/>
            <person name="Volckaert G."/>
            <person name="Aert R."/>
            <person name="Robben J."/>
            <person name="Grymonprez B."/>
            <person name="Weltjens I."/>
            <person name="Vanstreels E."/>
            <person name="Rieger M."/>
            <person name="Schaefer M."/>
            <person name="Mueller-Auer S."/>
            <person name="Gabel C."/>
            <person name="Fuchs M."/>
            <person name="Duesterhoeft A."/>
            <person name="Fritzc C."/>
            <person name="Holzer E."/>
            <person name="Moestl D."/>
            <person name="Hilbert H."/>
            <person name="Borzym K."/>
            <person name="Langer I."/>
            <person name="Beck A."/>
            <person name="Lehrach H."/>
            <person name="Reinhardt R."/>
            <person name="Pohl T.M."/>
            <person name="Eger P."/>
            <person name="Zimmermann W."/>
            <person name="Wedler H."/>
            <person name="Wambutt R."/>
            <person name="Purnelle B."/>
            <person name="Goffeau A."/>
            <person name="Cadieu E."/>
            <person name="Dreano S."/>
            <person name="Gloux S."/>
            <person name="Lelaure V."/>
            <person name="Mottier S."/>
            <person name="Galibert F."/>
            <person name="Aves S.J."/>
            <person name="Xiang Z."/>
            <person name="Hunt C."/>
            <person name="Moore K."/>
            <person name="Hurst S.M."/>
            <person name="Lucas M."/>
            <person name="Rochet M."/>
            <person name="Gaillardin C."/>
            <person name="Tallada V.A."/>
            <person name="Garzon A."/>
            <person name="Thode G."/>
            <person name="Daga R.R."/>
            <person name="Cruzado L."/>
            <person name="Jimenez J."/>
            <person name="Sanchez M."/>
            <person name="del Rey F."/>
            <person name="Benito J."/>
            <person name="Dominguez A."/>
            <person name="Revuelta J.L."/>
            <person name="Moreno S."/>
            <person name="Armstrong J."/>
            <person name="Forsburg S.L."/>
            <person name="Cerutti L."/>
            <person name="Lowe T."/>
            <person name="McCombie W.R."/>
            <person name="Paulsen I."/>
            <person name="Potashkin J."/>
            <person name="Shpakovski G.V."/>
            <person name="Ussery D."/>
            <person name="Barrell B.G."/>
            <person name="Nurse P."/>
        </authorList>
    </citation>
    <scope>NUCLEOTIDE SEQUENCE [LARGE SCALE GENOMIC DNA]</scope>
    <source>
        <strain>972 / ATCC 24843</strain>
    </source>
</reference>
<reference key="3">
    <citation type="journal article" date="2006" name="Nat. Biotechnol.">
        <title>ORFeome cloning and global analysis of protein localization in the fission yeast Schizosaccharomyces pombe.</title>
        <authorList>
            <person name="Matsuyama A."/>
            <person name="Arai R."/>
            <person name="Yashiroda Y."/>
            <person name="Shirai A."/>
            <person name="Kamata A."/>
            <person name="Sekido S."/>
            <person name="Kobayashi Y."/>
            <person name="Hashimoto A."/>
            <person name="Hamamoto M."/>
            <person name="Hiraoka Y."/>
            <person name="Horinouchi S."/>
            <person name="Yoshida M."/>
        </authorList>
    </citation>
    <scope>SUBCELLULAR LOCATION [LARGE SCALE ANALYSIS]</scope>
</reference>
<sequence length="126" mass="14341">MKFSRDVTSSRRKQRKAHFGAPSSVRRVLMSAPLSKELREQYKIRSLPVRRDDQITVIRGSNKGREGKITSVYRKKFLLLIERVTREKANGASAPVGIDASKVVITKLHLDKDRKDLIVRKGGKVE</sequence>